<dbReference type="EMBL" id="CP000453">
    <property type="protein sequence ID" value="ABI57204.1"/>
    <property type="molecule type" value="Genomic_DNA"/>
</dbReference>
<dbReference type="RefSeq" id="WP_011629598.1">
    <property type="nucleotide sequence ID" value="NC_008340.1"/>
</dbReference>
<dbReference type="SMR" id="Q0A7I3"/>
<dbReference type="KEGG" id="aeh:Mlg_1860"/>
<dbReference type="eggNOG" id="COG0233">
    <property type="taxonomic scope" value="Bacteria"/>
</dbReference>
<dbReference type="HOGENOM" id="CLU_073981_2_0_6"/>
<dbReference type="OrthoDB" id="9804006at2"/>
<dbReference type="Proteomes" id="UP000001962">
    <property type="component" value="Chromosome"/>
</dbReference>
<dbReference type="GO" id="GO:0005829">
    <property type="term" value="C:cytosol"/>
    <property type="evidence" value="ECO:0007669"/>
    <property type="project" value="GOC"/>
</dbReference>
<dbReference type="GO" id="GO:0043023">
    <property type="term" value="F:ribosomal large subunit binding"/>
    <property type="evidence" value="ECO:0007669"/>
    <property type="project" value="TreeGrafter"/>
</dbReference>
<dbReference type="GO" id="GO:0002184">
    <property type="term" value="P:cytoplasmic translational termination"/>
    <property type="evidence" value="ECO:0007669"/>
    <property type="project" value="TreeGrafter"/>
</dbReference>
<dbReference type="CDD" id="cd00520">
    <property type="entry name" value="RRF"/>
    <property type="match status" value="1"/>
</dbReference>
<dbReference type="FunFam" id="1.10.132.20:FF:000001">
    <property type="entry name" value="Ribosome-recycling factor"/>
    <property type="match status" value="1"/>
</dbReference>
<dbReference type="FunFam" id="3.30.1360.40:FF:000001">
    <property type="entry name" value="Ribosome-recycling factor"/>
    <property type="match status" value="1"/>
</dbReference>
<dbReference type="Gene3D" id="3.30.1360.40">
    <property type="match status" value="1"/>
</dbReference>
<dbReference type="Gene3D" id="1.10.132.20">
    <property type="entry name" value="Ribosome-recycling factor"/>
    <property type="match status" value="1"/>
</dbReference>
<dbReference type="HAMAP" id="MF_00040">
    <property type="entry name" value="RRF"/>
    <property type="match status" value="1"/>
</dbReference>
<dbReference type="InterPro" id="IPR002661">
    <property type="entry name" value="Ribosome_recyc_fac"/>
</dbReference>
<dbReference type="InterPro" id="IPR023584">
    <property type="entry name" value="Ribosome_recyc_fac_dom"/>
</dbReference>
<dbReference type="InterPro" id="IPR036191">
    <property type="entry name" value="RRF_sf"/>
</dbReference>
<dbReference type="NCBIfam" id="TIGR00496">
    <property type="entry name" value="frr"/>
    <property type="match status" value="1"/>
</dbReference>
<dbReference type="PANTHER" id="PTHR20982:SF3">
    <property type="entry name" value="MITOCHONDRIAL RIBOSOME RECYCLING FACTOR PSEUDO 1"/>
    <property type="match status" value="1"/>
</dbReference>
<dbReference type="PANTHER" id="PTHR20982">
    <property type="entry name" value="RIBOSOME RECYCLING FACTOR"/>
    <property type="match status" value="1"/>
</dbReference>
<dbReference type="Pfam" id="PF01765">
    <property type="entry name" value="RRF"/>
    <property type="match status" value="1"/>
</dbReference>
<dbReference type="SUPFAM" id="SSF55194">
    <property type="entry name" value="Ribosome recycling factor, RRF"/>
    <property type="match status" value="1"/>
</dbReference>
<gene>
    <name evidence="1" type="primary">frr</name>
    <name type="ordered locus">Mlg_1860</name>
</gene>
<keyword id="KW-0963">Cytoplasm</keyword>
<keyword id="KW-0648">Protein biosynthesis</keyword>
<keyword id="KW-1185">Reference proteome</keyword>
<accession>Q0A7I3</accession>
<organism>
    <name type="scientific">Alkalilimnicola ehrlichii (strain ATCC BAA-1101 / DSM 17681 / MLHE-1)</name>
    <dbReference type="NCBI Taxonomy" id="187272"/>
    <lineage>
        <taxon>Bacteria</taxon>
        <taxon>Pseudomonadati</taxon>
        <taxon>Pseudomonadota</taxon>
        <taxon>Gammaproteobacteria</taxon>
        <taxon>Chromatiales</taxon>
        <taxon>Ectothiorhodospiraceae</taxon>
        <taxon>Alkalilimnicola</taxon>
    </lineage>
</organism>
<reference key="1">
    <citation type="submission" date="2006-08" db="EMBL/GenBank/DDBJ databases">
        <title>Complete sequence of Alkalilimnicola ehrilichei MLHE-1.</title>
        <authorList>
            <person name="Copeland A."/>
            <person name="Lucas S."/>
            <person name="Lapidus A."/>
            <person name="Barry K."/>
            <person name="Detter J.C."/>
            <person name="Glavina del Rio T."/>
            <person name="Hammon N."/>
            <person name="Israni S."/>
            <person name="Dalin E."/>
            <person name="Tice H."/>
            <person name="Pitluck S."/>
            <person name="Sims D."/>
            <person name="Brettin T."/>
            <person name="Bruce D."/>
            <person name="Han C."/>
            <person name="Tapia R."/>
            <person name="Gilna P."/>
            <person name="Schmutz J."/>
            <person name="Larimer F."/>
            <person name="Land M."/>
            <person name="Hauser L."/>
            <person name="Kyrpides N."/>
            <person name="Mikhailova N."/>
            <person name="Oremland R.S."/>
            <person name="Hoeft S.E."/>
            <person name="Switzer-Blum J."/>
            <person name="Kulp T."/>
            <person name="King G."/>
            <person name="Tabita R."/>
            <person name="Witte B."/>
            <person name="Santini J.M."/>
            <person name="Basu P."/>
            <person name="Hollibaugh J.T."/>
            <person name="Xie G."/>
            <person name="Stolz J.F."/>
            <person name="Richardson P."/>
        </authorList>
    </citation>
    <scope>NUCLEOTIDE SEQUENCE [LARGE SCALE GENOMIC DNA]</scope>
    <source>
        <strain>ATCC BAA-1101 / DSM 17681 / MLHE-1</strain>
    </source>
</reference>
<feature type="chain" id="PRO_1000003102" description="Ribosome-recycling factor">
    <location>
        <begin position="1"/>
        <end position="185"/>
    </location>
</feature>
<protein>
    <recommendedName>
        <fullName evidence="1">Ribosome-recycling factor</fullName>
        <shortName evidence="1">RRF</shortName>
    </recommendedName>
    <alternativeName>
        <fullName evidence="1">Ribosome-releasing factor</fullName>
    </alternativeName>
</protein>
<sequence>MIDEIRKDAETRMKKSIEAFRAELRKIRTGRAHTNLLDHISVTYYGTEVPLNQAASVKVEDARTLSVIPFEKSMVPEVEKAIQSSDLGLTPTTAGTVIRIPMPPLTEDRRKELVKVVRSEAEQARVAIRNIRRDANSDLKELLKEKEISEDEERGGEDAIQKLTDKYTGEVDRILQEKEKELMEI</sequence>
<proteinExistence type="inferred from homology"/>
<evidence type="ECO:0000255" key="1">
    <source>
        <dbReference type="HAMAP-Rule" id="MF_00040"/>
    </source>
</evidence>
<name>RRF_ALKEH</name>
<comment type="function">
    <text evidence="1">Responsible for the release of ribosomes from messenger RNA at the termination of protein biosynthesis. May increase the efficiency of translation by recycling ribosomes from one round of translation to another.</text>
</comment>
<comment type="subcellular location">
    <subcellularLocation>
        <location evidence="1">Cytoplasm</location>
    </subcellularLocation>
</comment>
<comment type="similarity">
    <text evidence="1">Belongs to the RRF family.</text>
</comment>